<organism>
    <name type="scientific">Mesomycoplasma hyopneumoniae (strain J / ATCC 25934 / NCTC 10110)</name>
    <name type="common">Mycoplasma hyopneumoniae</name>
    <dbReference type="NCBI Taxonomy" id="262719"/>
    <lineage>
        <taxon>Bacteria</taxon>
        <taxon>Bacillati</taxon>
        <taxon>Mycoplasmatota</taxon>
        <taxon>Mycoplasmoidales</taxon>
        <taxon>Metamycoplasmataceae</taxon>
        <taxon>Mesomycoplasma</taxon>
    </lineage>
</organism>
<comment type="function">
    <text evidence="1">Catalyzes a reversible aldol reaction between acetaldehyde and D-glyceraldehyde 3-phosphate to generate 2-deoxy-D-ribose 5-phosphate.</text>
</comment>
<comment type="catalytic activity">
    <reaction evidence="1">
        <text>2-deoxy-D-ribose 5-phosphate = D-glyceraldehyde 3-phosphate + acetaldehyde</text>
        <dbReference type="Rhea" id="RHEA:12821"/>
        <dbReference type="ChEBI" id="CHEBI:15343"/>
        <dbReference type="ChEBI" id="CHEBI:59776"/>
        <dbReference type="ChEBI" id="CHEBI:62877"/>
        <dbReference type="EC" id="4.1.2.4"/>
    </reaction>
</comment>
<comment type="pathway">
    <text evidence="1">Carbohydrate degradation; 2-deoxy-D-ribose 1-phosphate degradation; D-glyceraldehyde 3-phosphate and acetaldehyde from 2-deoxy-alpha-D-ribose 1-phosphate: step 2/2.</text>
</comment>
<comment type="subcellular location">
    <subcellularLocation>
        <location evidence="1">Cytoplasm</location>
    </subcellularLocation>
</comment>
<comment type="similarity">
    <text evidence="1">Belongs to the DeoC/FbaB aldolase family. DeoC type 1 subfamily.</text>
</comment>
<proteinExistence type="inferred from homology"/>
<sequence>MNFNVIIDHTLLKPQATSQDIKILIEEAKKYNFGAICIAPIWVKLAKKELKNTNIKIVTVIGFPLGSQISAIKQKEASLAIAHGADEIDMVMNIGKFKEKDFQFIINEINQIKKEIGTKILKVIIETALLSPHEIADATKLVSSTNADFIKTSTGFSYRGASEQDLKIIKENKSEKLAIKAAGGITNLADMENFYRLGATRFGTSKSVSIIKNLTDKKNEY</sequence>
<protein>
    <recommendedName>
        <fullName evidence="1">Deoxyribose-phosphate aldolase</fullName>
        <shortName evidence="1">DERA</shortName>
        <ecNumber evidence="1">4.1.2.4</ecNumber>
    </recommendedName>
    <alternativeName>
        <fullName evidence="1">2-deoxy-D-ribose 5-phosphate aldolase</fullName>
    </alternativeName>
    <alternativeName>
        <fullName evidence="1">Phosphodeoxyriboaldolase</fullName>
        <shortName evidence="1">Deoxyriboaldolase</shortName>
    </alternativeName>
</protein>
<name>DEOC_MESHJ</name>
<dbReference type="EC" id="4.1.2.4" evidence="1"/>
<dbReference type="EMBL" id="AE017243">
    <property type="protein sequence ID" value="AAZ44614.1"/>
    <property type="molecule type" value="Genomic_DNA"/>
</dbReference>
<dbReference type="RefSeq" id="WP_011284272.1">
    <property type="nucleotide sequence ID" value="NC_007295.1"/>
</dbReference>
<dbReference type="SMR" id="Q4A9F7"/>
<dbReference type="GeneID" id="41334827"/>
<dbReference type="KEGG" id="mhj:MHJ_0528"/>
<dbReference type="eggNOG" id="COG0274">
    <property type="taxonomic scope" value="Bacteria"/>
</dbReference>
<dbReference type="HOGENOM" id="CLU_053595_0_2_14"/>
<dbReference type="OrthoDB" id="9778711at2"/>
<dbReference type="UniPathway" id="UPA00002">
    <property type="reaction ID" value="UER00468"/>
</dbReference>
<dbReference type="Proteomes" id="UP000000548">
    <property type="component" value="Chromosome"/>
</dbReference>
<dbReference type="GO" id="GO:0005737">
    <property type="term" value="C:cytoplasm"/>
    <property type="evidence" value="ECO:0007669"/>
    <property type="project" value="UniProtKB-SubCell"/>
</dbReference>
<dbReference type="GO" id="GO:0004139">
    <property type="term" value="F:deoxyribose-phosphate aldolase activity"/>
    <property type="evidence" value="ECO:0007669"/>
    <property type="project" value="UniProtKB-UniRule"/>
</dbReference>
<dbReference type="GO" id="GO:0006018">
    <property type="term" value="P:2-deoxyribose 1-phosphate catabolic process"/>
    <property type="evidence" value="ECO:0007669"/>
    <property type="project" value="UniProtKB-UniRule"/>
</dbReference>
<dbReference type="GO" id="GO:0016052">
    <property type="term" value="P:carbohydrate catabolic process"/>
    <property type="evidence" value="ECO:0007669"/>
    <property type="project" value="TreeGrafter"/>
</dbReference>
<dbReference type="GO" id="GO:0009264">
    <property type="term" value="P:deoxyribonucleotide catabolic process"/>
    <property type="evidence" value="ECO:0007669"/>
    <property type="project" value="InterPro"/>
</dbReference>
<dbReference type="CDD" id="cd00959">
    <property type="entry name" value="DeoC"/>
    <property type="match status" value="1"/>
</dbReference>
<dbReference type="FunFam" id="3.20.20.70:FF:000044">
    <property type="entry name" value="Deoxyribose-phosphate aldolase"/>
    <property type="match status" value="1"/>
</dbReference>
<dbReference type="Gene3D" id="3.20.20.70">
    <property type="entry name" value="Aldolase class I"/>
    <property type="match status" value="1"/>
</dbReference>
<dbReference type="HAMAP" id="MF_00114">
    <property type="entry name" value="DeoC_type1"/>
    <property type="match status" value="1"/>
</dbReference>
<dbReference type="InterPro" id="IPR013785">
    <property type="entry name" value="Aldolase_TIM"/>
</dbReference>
<dbReference type="InterPro" id="IPR011343">
    <property type="entry name" value="DeoC"/>
</dbReference>
<dbReference type="InterPro" id="IPR002915">
    <property type="entry name" value="DeoC/FbaB/LacD_aldolase"/>
</dbReference>
<dbReference type="InterPro" id="IPR028581">
    <property type="entry name" value="DeoC_typeI"/>
</dbReference>
<dbReference type="NCBIfam" id="TIGR00126">
    <property type="entry name" value="deoC"/>
    <property type="match status" value="1"/>
</dbReference>
<dbReference type="PANTHER" id="PTHR10889">
    <property type="entry name" value="DEOXYRIBOSE-PHOSPHATE ALDOLASE"/>
    <property type="match status" value="1"/>
</dbReference>
<dbReference type="PANTHER" id="PTHR10889:SF1">
    <property type="entry name" value="DEOXYRIBOSE-PHOSPHATE ALDOLASE"/>
    <property type="match status" value="1"/>
</dbReference>
<dbReference type="Pfam" id="PF01791">
    <property type="entry name" value="DeoC"/>
    <property type="match status" value="1"/>
</dbReference>
<dbReference type="PIRSF" id="PIRSF001357">
    <property type="entry name" value="DeoC"/>
    <property type="match status" value="1"/>
</dbReference>
<dbReference type="SMART" id="SM01133">
    <property type="entry name" value="DeoC"/>
    <property type="match status" value="1"/>
</dbReference>
<dbReference type="SUPFAM" id="SSF51569">
    <property type="entry name" value="Aldolase"/>
    <property type="match status" value="1"/>
</dbReference>
<evidence type="ECO:0000255" key="1">
    <source>
        <dbReference type="HAMAP-Rule" id="MF_00114"/>
    </source>
</evidence>
<accession>Q4A9F7</accession>
<gene>
    <name evidence="1" type="primary">deoC</name>
    <name type="ordered locus">MHJ_0528</name>
</gene>
<keyword id="KW-0963">Cytoplasm</keyword>
<keyword id="KW-0456">Lyase</keyword>
<keyword id="KW-0704">Schiff base</keyword>
<reference key="1">
    <citation type="journal article" date="2005" name="J. Bacteriol.">
        <title>Swine and poultry pathogens: the complete genome sequences of two strains of Mycoplasma hyopneumoniae and a strain of Mycoplasma synoviae.</title>
        <authorList>
            <person name="Vasconcelos A.T.R."/>
            <person name="Ferreira H.B."/>
            <person name="Bizarro C.V."/>
            <person name="Bonatto S.L."/>
            <person name="Carvalho M.O."/>
            <person name="Pinto P.M."/>
            <person name="Almeida D.F."/>
            <person name="Almeida L.G.P."/>
            <person name="Almeida R."/>
            <person name="Alves-Junior L."/>
            <person name="Assuncao E.N."/>
            <person name="Azevedo V.A.C."/>
            <person name="Bogo M.R."/>
            <person name="Brigido M.M."/>
            <person name="Brocchi M."/>
            <person name="Burity H.A."/>
            <person name="Camargo A.A."/>
            <person name="Camargo S.S."/>
            <person name="Carepo M.S."/>
            <person name="Carraro D.M."/>
            <person name="de Mattos Cascardo J.C."/>
            <person name="Castro L.A."/>
            <person name="Cavalcanti G."/>
            <person name="Chemale G."/>
            <person name="Collevatti R.G."/>
            <person name="Cunha C.W."/>
            <person name="Dallagiovanna B."/>
            <person name="Dambros B.P."/>
            <person name="Dellagostin O.A."/>
            <person name="Falcao C."/>
            <person name="Fantinatti-Garboggini F."/>
            <person name="Felipe M.S.S."/>
            <person name="Fiorentin L."/>
            <person name="Franco G.R."/>
            <person name="Freitas N.S.A."/>
            <person name="Frias D."/>
            <person name="Grangeiro T.B."/>
            <person name="Grisard E.C."/>
            <person name="Guimaraes C.T."/>
            <person name="Hungria M."/>
            <person name="Jardim S.N."/>
            <person name="Krieger M.A."/>
            <person name="Laurino J.P."/>
            <person name="Lima L.F.A."/>
            <person name="Lopes M.I."/>
            <person name="Loreto E.L.S."/>
            <person name="Madeira H.M.F."/>
            <person name="Manfio G.P."/>
            <person name="Maranhao A.Q."/>
            <person name="Martinkovics C.T."/>
            <person name="Medeiros S.R.B."/>
            <person name="Moreira M.A.M."/>
            <person name="Neiva M."/>
            <person name="Ramalho-Neto C.E."/>
            <person name="Nicolas M.F."/>
            <person name="Oliveira S.C."/>
            <person name="Paixao R.F.C."/>
            <person name="Pedrosa F.O."/>
            <person name="Pena S.D.J."/>
            <person name="Pereira M."/>
            <person name="Pereira-Ferrari L."/>
            <person name="Piffer I."/>
            <person name="Pinto L.S."/>
            <person name="Potrich D.P."/>
            <person name="Salim A.C.M."/>
            <person name="Santos F.R."/>
            <person name="Schmitt R."/>
            <person name="Schneider M.P.C."/>
            <person name="Schrank A."/>
            <person name="Schrank I.S."/>
            <person name="Schuck A.F."/>
            <person name="Seuanez H.N."/>
            <person name="Silva D.W."/>
            <person name="Silva R."/>
            <person name="Silva S.C."/>
            <person name="Soares C.M.A."/>
            <person name="Souza K.R.L."/>
            <person name="Souza R.C."/>
            <person name="Staats C.C."/>
            <person name="Steffens M.B.R."/>
            <person name="Teixeira S.M.R."/>
            <person name="Urmenyi T.P."/>
            <person name="Vainstein M.H."/>
            <person name="Zuccherato L.W."/>
            <person name="Simpson A.J.G."/>
            <person name="Zaha A."/>
        </authorList>
    </citation>
    <scope>NUCLEOTIDE SEQUENCE [LARGE SCALE GENOMIC DNA]</scope>
    <source>
        <strain>J / ATCC 25934 / NCTC 10110</strain>
    </source>
</reference>
<feature type="chain" id="PRO_0000231553" description="Deoxyribose-phosphate aldolase">
    <location>
        <begin position="1"/>
        <end position="221"/>
    </location>
</feature>
<feature type="active site" description="Proton donor/acceptor" evidence="1">
    <location>
        <position position="89"/>
    </location>
</feature>
<feature type="active site" description="Schiff-base intermediate with acetaldehyde" evidence="1">
    <location>
        <position position="151"/>
    </location>
</feature>
<feature type="active site" description="Proton donor/acceptor" evidence="1">
    <location>
        <position position="180"/>
    </location>
</feature>